<comment type="similarity">
    <text evidence="1">Belongs to the SfsA family.</text>
</comment>
<sequence length="234" mass="26012">MQFEPALQQGRLVKRYKRFLADIKLADGSEMTIHCPNTGSMRNCLFPGEAVWFSTSANPKRKYAYTWELMGTPNGGFIGIHSGSANALAEEAIHSGIIKELTGYDTLSREVKYGDENSRIDILLQGAQKPDCYIEVKSCTLLEDGQGFFPDAVSLRGQKHLRELMHMANLGHRAVLLFVVQHSEIFSVAPAAHIDHEYANLLKKATLSGVEVLAYRCEMSPTEIRLAQACPVRV</sequence>
<protein>
    <recommendedName>
        <fullName evidence="1">Sugar fermentation stimulation protein homolog</fullName>
    </recommendedName>
</protein>
<feature type="chain" id="PRO_1000008027" description="Sugar fermentation stimulation protein homolog">
    <location>
        <begin position="1"/>
        <end position="234"/>
    </location>
</feature>
<gene>
    <name evidence="1" type="primary">sfsA</name>
    <name type="ordered locus">Sputcn32_3127</name>
</gene>
<accession>A4YA56</accession>
<reference key="1">
    <citation type="submission" date="2007-04" db="EMBL/GenBank/DDBJ databases">
        <title>Complete sequence of Shewanella putrefaciens CN-32.</title>
        <authorList>
            <consortium name="US DOE Joint Genome Institute"/>
            <person name="Copeland A."/>
            <person name="Lucas S."/>
            <person name="Lapidus A."/>
            <person name="Barry K."/>
            <person name="Detter J.C."/>
            <person name="Glavina del Rio T."/>
            <person name="Hammon N."/>
            <person name="Israni S."/>
            <person name="Dalin E."/>
            <person name="Tice H."/>
            <person name="Pitluck S."/>
            <person name="Chain P."/>
            <person name="Malfatti S."/>
            <person name="Shin M."/>
            <person name="Vergez L."/>
            <person name="Schmutz J."/>
            <person name="Larimer F."/>
            <person name="Land M."/>
            <person name="Hauser L."/>
            <person name="Kyrpides N."/>
            <person name="Mikhailova N."/>
            <person name="Romine M.F."/>
            <person name="Fredrickson J."/>
            <person name="Tiedje J."/>
            <person name="Richardson P."/>
        </authorList>
    </citation>
    <scope>NUCLEOTIDE SEQUENCE [LARGE SCALE GENOMIC DNA]</scope>
    <source>
        <strain>CN-32 / ATCC BAA-453</strain>
    </source>
</reference>
<proteinExistence type="inferred from homology"/>
<dbReference type="EMBL" id="CP000681">
    <property type="protein sequence ID" value="ABP76839.1"/>
    <property type="molecule type" value="Genomic_DNA"/>
</dbReference>
<dbReference type="SMR" id="A4YA56"/>
<dbReference type="STRING" id="319224.Sputcn32_3127"/>
<dbReference type="KEGG" id="spc:Sputcn32_3127"/>
<dbReference type="eggNOG" id="COG1489">
    <property type="taxonomic scope" value="Bacteria"/>
</dbReference>
<dbReference type="HOGENOM" id="CLU_052299_2_0_6"/>
<dbReference type="GO" id="GO:0003677">
    <property type="term" value="F:DNA binding"/>
    <property type="evidence" value="ECO:0007669"/>
    <property type="project" value="InterPro"/>
</dbReference>
<dbReference type="CDD" id="cd22359">
    <property type="entry name" value="SfsA-like_bacterial"/>
    <property type="match status" value="1"/>
</dbReference>
<dbReference type="FunFam" id="2.40.50.580:FF:000001">
    <property type="entry name" value="Sugar fermentation stimulation protein A"/>
    <property type="match status" value="1"/>
</dbReference>
<dbReference type="FunFam" id="3.40.1350.60:FF:000001">
    <property type="entry name" value="Sugar fermentation stimulation protein A"/>
    <property type="match status" value="1"/>
</dbReference>
<dbReference type="Gene3D" id="2.40.50.580">
    <property type="match status" value="1"/>
</dbReference>
<dbReference type="Gene3D" id="3.40.1350.60">
    <property type="match status" value="1"/>
</dbReference>
<dbReference type="HAMAP" id="MF_00095">
    <property type="entry name" value="SfsA"/>
    <property type="match status" value="1"/>
</dbReference>
<dbReference type="InterPro" id="IPR005224">
    <property type="entry name" value="SfsA"/>
</dbReference>
<dbReference type="InterPro" id="IPR040452">
    <property type="entry name" value="SfsA_C"/>
</dbReference>
<dbReference type="InterPro" id="IPR041465">
    <property type="entry name" value="SfsA_N"/>
</dbReference>
<dbReference type="NCBIfam" id="TIGR00230">
    <property type="entry name" value="sfsA"/>
    <property type="match status" value="1"/>
</dbReference>
<dbReference type="PANTHER" id="PTHR30545">
    <property type="entry name" value="SUGAR FERMENTATION STIMULATION PROTEIN A"/>
    <property type="match status" value="1"/>
</dbReference>
<dbReference type="PANTHER" id="PTHR30545:SF2">
    <property type="entry name" value="SUGAR FERMENTATION STIMULATION PROTEIN A"/>
    <property type="match status" value="1"/>
</dbReference>
<dbReference type="Pfam" id="PF03749">
    <property type="entry name" value="SfsA"/>
    <property type="match status" value="1"/>
</dbReference>
<dbReference type="Pfam" id="PF17746">
    <property type="entry name" value="SfsA_N"/>
    <property type="match status" value="1"/>
</dbReference>
<organism>
    <name type="scientific">Shewanella putrefaciens (strain CN-32 / ATCC BAA-453)</name>
    <dbReference type="NCBI Taxonomy" id="319224"/>
    <lineage>
        <taxon>Bacteria</taxon>
        <taxon>Pseudomonadati</taxon>
        <taxon>Pseudomonadota</taxon>
        <taxon>Gammaproteobacteria</taxon>
        <taxon>Alteromonadales</taxon>
        <taxon>Shewanellaceae</taxon>
        <taxon>Shewanella</taxon>
    </lineage>
</organism>
<name>SFSA_SHEPC</name>
<evidence type="ECO:0000255" key="1">
    <source>
        <dbReference type="HAMAP-Rule" id="MF_00095"/>
    </source>
</evidence>